<name>RADA_HALS3</name>
<gene>
    <name evidence="1" type="primary">radA</name>
    <name type="ordered locus">OE_4466R</name>
</gene>
<dbReference type="EMBL" id="AM774415">
    <property type="protein sequence ID" value="CAP14853.1"/>
    <property type="molecule type" value="Genomic_DNA"/>
</dbReference>
<dbReference type="RefSeq" id="WP_012289511.1">
    <property type="nucleotide sequence ID" value="NC_010364.1"/>
</dbReference>
<dbReference type="SMR" id="B0R7Y4"/>
<dbReference type="EnsemblBacteria" id="CAP14853">
    <property type="protein sequence ID" value="CAP14853"/>
    <property type="gene ID" value="OE_4466R"/>
</dbReference>
<dbReference type="GeneID" id="89348476"/>
<dbReference type="KEGG" id="hsl:OE_4466R"/>
<dbReference type="HOGENOM" id="CLU_041732_0_0_2"/>
<dbReference type="PhylomeDB" id="B0R7Y4"/>
<dbReference type="Proteomes" id="UP000001321">
    <property type="component" value="Chromosome"/>
</dbReference>
<dbReference type="GO" id="GO:0005524">
    <property type="term" value="F:ATP binding"/>
    <property type="evidence" value="ECO:0007669"/>
    <property type="project" value="UniProtKB-UniRule"/>
</dbReference>
<dbReference type="GO" id="GO:0016887">
    <property type="term" value="F:ATP hydrolysis activity"/>
    <property type="evidence" value="ECO:0007669"/>
    <property type="project" value="InterPro"/>
</dbReference>
<dbReference type="GO" id="GO:0140664">
    <property type="term" value="F:ATP-dependent DNA damage sensor activity"/>
    <property type="evidence" value="ECO:0007669"/>
    <property type="project" value="InterPro"/>
</dbReference>
<dbReference type="GO" id="GO:0003684">
    <property type="term" value="F:damaged DNA binding"/>
    <property type="evidence" value="ECO:0007669"/>
    <property type="project" value="UniProtKB-UniRule"/>
</dbReference>
<dbReference type="GO" id="GO:0006310">
    <property type="term" value="P:DNA recombination"/>
    <property type="evidence" value="ECO:0007669"/>
    <property type="project" value="UniProtKB-UniRule"/>
</dbReference>
<dbReference type="GO" id="GO:0006281">
    <property type="term" value="P:DNA repair"/>
    <property type="evidence" value="ECO:0007669"/>
    <property type="project" value="UniProtKB-UniRule"/>
</dbReference>
<dbReference type="CDD" id="cd19515">
    <property type="entry name" value="archRadA"/>
    <property type="match status" value="1"/>
</dbReference>
<dbReference type="Gene3D" id="1.10.150.20">
    <property type="entry name" value="5' to 3' exonuclease, C-terminal subdomain"/>
    <property type="match status" value="1"/>
</dbReference>
<dbReference type="Gene3D" id="3.40.50.300">
    <property type="entry name" value="P-loop containing nucleotide triphosphate hydrolases"/>
    <property type="match status" value="1"/>
</dbReference>
<dbReference type="HAMAP" id="MF_00348">
    <property type="entry name" value="RadA_arch"/>
    <property type="match status" value="1"/>
</dbReference>
<dbReference type="InterPro" id="IPR003593">
    <property type="entry name" value="AAA+_ATPase"/>
</dbReference>
<dbReference type="InterPro" id="IPR013632">
    <property type="entry name" value="DNA_recomb/repair_Rad51_C"/>
</dbReference>
<dbReference type="InterPro" id="IPR011938">
    <property type="entry name" value="DNA_recomb/repair_RadA"/>
</dbReference>
<dbReference type="InterPro" id="IPR016467">
    <property type="entry name" value="DNA_recomb/repair_RecA-like"/>
</dbReference>
<dbReference type="InterPro" id="IPR010995">
    <property type="entry name" value="DNA_repair_Rad51/TF_NusA_a-hlx"/>
</dbReference>
<dbReference type="InterPro" id="IPR003583">
    <property type="entry name" value="Hlx-hairpin-Hlx_DNA-bd_motif"/>
</dbReference>
<dbReference type="InterPro" id="IPR027417">
    <property type="entry name" value="P-loop_NTPase"/>
</dbReference>
<dbReference type="InterPro" id="IPR020588">
    <property type="entry name" value="RecA_ATP-bd"/>
</dbReference>
<dbReference type="InterPro" id="IPR020587">
    <property type="entry name" value="RecA_monomer-monomer_interface"/>
</dbReference>
<dbReference type="NCBIfam" id="NF003301">
    <property type="entry name" value="PRK04301.1"/>
    <property type="match status" value="1"/>
</dbReference>
<dbReference type="NCBIfam" id="TIGR02236">
    <property type="entry name" value="recomb_radA"/>
    <property type="match status" value="1"/>
</dbReference>
<dbReference type="PANTHER" id="PTHR22942:SF30">
    <property type="entry name" value="MEIOTIC RECOMBINATION PROTEIN DMC1_LIM15 HOMOLOG"/>
    <property type="match status" value="1"/>
</dbReference>
<dbReference type="PANTHER" id="PTHR22942">
    <property type="entry name" value="RECA/RAD51/RADA DNA STRAND-PAIRING FAMILY MEMBER"/>
    <property type="match status" value="1"/>
</dbReference>
<dbReference type="Pfam" id="PF14520">
    <property type="entry name" value="HHH_5"/>
    <property type="match status" value="1"/>
</dbReference>
<dbReference type="Pfam" id="PF08423">
    <property type="entry name" value="Rad51"/>
    <property type="match status" value="2"/>
</dbReference>
<dbReference type="PIRSF" id="PIRSF005856">
    <property type="entry name" value="Rad51"/>
    <property type="match status" value="1"/>
</dbReference>
<dbReference type="SMART" id="SM00382">
    <property type="entry name" value="AAA"/>
    <property type="match status" value="1"/>
</dbReference>
<dbReference type="SMART" id="SM00278">
    <property type="entry name" value="HhH1"/>
    <property type="match status" value="2"/>
</dbReference>
<dbReference type="SUPFAM" id="SSF52540">
    <property type="entry name" value="P-loop containing nucleoside triphosphate hydrolases"/>
    <property type="match status" value="1"/>
</dbReference>
<dbReference type="SUPFAM" id="SSF47794">
    <property type="entry name" value="Rad51 N-terminal domain-like"/>
    <property type="match status" value="1"/>
</dbReference>
<dbReference type="PROSITE" id="PS50162">
    <property type="entry name" value="RECA_2"/>
    <property type="match status" value="1"/>
</dbReference>
<dbReference type="PROSITE" id="PS50163">
    <property type="entry name" value="RECA_3"/>
    <property type="match status" value="1"/>
</dbReference>
<feature type="chain" id="PRO_1000120509" description="DNA repair and recombination protein RadA">
    <location>
        <begin position="1"/>
        <end position="343"/>
    </location>
</feature>
<feature type="binding site" evidence="1">
    <location>
        <begin position="107"/>
        <end position="114"/>
    </location>
    <ligand>
        <name>ATP</name>
        <dbReference type="ChEBI" id="CHEBI:30616"/>
    </ligand>
</feature>
<sequence length="343" mass="37423">MPESDLEELPGVGPATAEKLRDNGFDAFQSLAVANSAELSNTADIGESTAADVIQAAREAADVGGFETGATVLERREQIGKLTWNIPEVDDLLGGGVETQSITEVYGEFGAGKSQVTHQLAVNVQLPTEYGGLHGRAVFIDSEDTFRPERIDDMVRGLSDETLQAAMEAHEIEGSTDDEDTLTELVDAFLDKIHVAKGFNSNHQMLLAEKAKEIASEHEDGDWPVRMLTVDSLTAHFRAEYVGRGELADRQQKLNKHLHDLEKVGNLYNAAVLVTNQVQSNPDAFFGDPTKPIGGNILGHKSTFRMYLRKSKNDKRIVKLVDAPNLADGEAVMRVQDEGLKPE</sequence>
<protein>
    <recommendedName>
        <fullName evidence="1">DNA repair and recombination protein RadA</fullName>
    </recommendedName>
</protein>
<proteinExistence type="inferred from homology"/>
<keyword id="KW-0067">ATP-binding</keyword>
<keyword id="KW-0227">DNA damage</keyword>
<keyword id="KW-0233">DNA recombination</keyword>
<keyword id="KW-0238">DNA-binding</keyword>
<keyword id="KW-0547">Nucleotide-binding</keyword>
<accession>B0R7Y4</accession>
<evidence type="ECO:0000255" key="1">
    <source>
        <dbReference type="HAMAP-Rule" id="MF_00348"/>
    </source>
</evidence>
<reference key="1">
    <citation type="journal article" date="2008" name="Genomics">
        <title>Evolution in the laboratory: the genome of Halobacterium salinarum strain R1 compared to that of strain NRC-1.</title>
        <authorList>
            <person name="Pfeiffer F."/>
            <person name="Schuster S.C."/>
            <person name="Broicher A."/>
            <person name="Falb M."/>
            <person name="Palm P."/>
            <person name="Rodewald K."/>
            <person name="Ruepp A."/>
            <person name="Soppa J."/>
            <person name="Tittor J."/>
            <person name="Oesterhelt D."/>
        </authorList>
    </citation>
    <scope>NUCLEOTIDE SEQUENCE [LARGE SCALE GENOMIC DNA]</scope>
    <source>
        <strain>ATCC 29341 / DSM 671 / R1</strain>
    </source>
</reference>
<comment type="function">
    <text evidence="1">Involved in DNA repair and in homologous recombination. Binds and assemble on single-stranded DNA to form a nucleoprotein filament. Hydrolyzes ATP in a ssDNA-dependent manner and promotes DNA strand exchange between homologous DNA molecules.</text>
</comment>
<comment type="similarity">
    <text evidence="1">Belongs to the eukaryotic RecA-like protein family.</text>
</comment>
<organism>
    <name type="scientific">Halobacterium salinarum (strain ATCC 29341 / DSM 671 / R1)</name>
    <dbReference type="NCBI Taxonomy" id="478009"/>
    <lineage>
        <taxon>Archaea</taxon>
        <taxon>Methanobacteriati</taxon>
        <taxon>Methanobacteriota</taxon>
        <taxon>Stenosarchaea group</taxon>
        <taxon>Halobacteria</taxon>
        <taxon>Halobacteriales</taxon>
        <taxon>Halobacteriaceae</taxon>
        <taxon>Halobacterium</taxon>
        <taxon>Halobacterium salinarum NRC-34001</taxon>
    </lineage>
</organism>